<protein>
    <recommendedName>
        <fullName evidence="1">Methionine import ATP-binding protein MetN 3</fullName>
        <ecNumber evidence="1">7.4.2.11</ecNumber>
    </recommendedName>
</protein>
<dbReference type="EC" id="7.4.2.11" evidence="1"/>
<dbReference type="EMBL" id="CP000001">
    <property type="protein sequence ID" value="AAU15567.1"/>
    <property type="molecule type" value="Genomic_DNA"/>
</dbReference>
<dbReference type="RefSeq" id="WP_000601759.1">
    <property type="nucleotide sequence ID" value="NZ_CP009968.1"/>
</dbReference>
<dbReference type="SMR" id="Q631Y4"/>
<dbReference type="KEGG" id="bcz:BCE33L4711"/>
<dbReference type="PATRIC" id="fig|288681.22.peg.648"/>
<dbReference type="Proteomes" id="UP000002612">
    <property type="component" value="Chromosome"/>
</dbReference>
<dbReference type="GO" id="GO:0005886">
    <property type="term" value="C:plasma membrane"/>
    <property type="evidence" value="ECO:0007669"/>
    <property type="project" value="UniProtKB-SubCell"/>
</dbReference>
<dbReference type="GO" id="GO:0033232">
    <property type="term" value="F:ABC-type D-methionine transporter activity"/>
    <property type="evidence" value="ECO:0007669"/>
    <property type="project" value="UniProtKB-EC"/>
</dbReference>
<dbReference type="GO" id="GO:0005524">
    <property type="term" value="F:ATP binding"/>
    <property type="evidence" value="ECO:0007669"/>
    <property type="project" value="UniProtKB-KW"/>
</dbReference>
<dbReference type="GO" id="GO:0016887">
    <property type="term" value="F:ATP hydrolysis activity"/>
    <property type="evidence" value="ECO:0007669"/>
    <property type="project" value="InterPro"/>
</dbReference>
<dbReference type="CDD" id="cd03258">
    <property type="entry name" value="ABC_MetN_methionine_transporter"/>
    <property type="match status" value="1"/>
</dbReference>
<dbReference type="FunFam" id="3.30.70.260:FF:000057">
    <property type="entry name" value="Methionine import ATP-binding protein MetN"/>
    <property type="match status" value="1"/>
</dbReference>
<dbReference type="FunFam" id="3.40.50.300:FF:000233">
    <property type="entry name" value="Methionine import ATP-binding protein MetN"/>
    <property type="match status" value="1"/>
</dbReference>
<dbReference type="Gene3D" id="3.30.70.260">
    <property type="match status" value="1"/>
</dbReference>
<dbReference type="Gene3D" id="3.40.50.300">
    <property type="entry name" value="P-loop containing nucleotide triphosphate hydrolases"/>
    <property type="match status" value="1"/>
</dbReference>
<dbReference type="InterPro" id="IPR003593">
    <property type="entry name" value="AAA+_ATPase"/>
</dbReference>
<dbReference type="InterPro" id="IPR003439">
    <property type="entry name" value="ABC_transporter-like_ATP-bd"/>
</dbReference>
<dbReference type="InterPro" id="IPR017871">
    <property type="entry name" value="ABC_transporter-like_CS"/>
</dbReference>
<dbReference type="InterPro" id="IPR045865">
    <property type="entry name" value="ACT-like_dom_sf"/>
</dbReference>
<dbReference type="InterPro" id="IPR041701">
    <property type="entry name" value="MetN_ABC"/>
</dbReference>
<dbReference type="InterPro" id="IPR050086">
    <property type="entry name" value="MetN_ABC_transporter-like"/>
</dbReference>
<dbReference type="InterPro" id="IPR018449">
    <property type="entry name" value="NIL_domain"/>
</dbReference>
<dbReference type="InterPro" id="IPR027417">
    <property type="entry name" value="P-loop_NTPase"/>
</dbReference>
<dbReference type="PANTHER" id="PTHR43166">
    <property type="entry name" value="AMINO ACID IMPORT ATP-BINDING PROTEIN"/>
    <property type="match status" value="1"/>
</dbReference>
<dbReference type="PANTHER" id="PTHR43166:SF36">
    <property type="entry name" value="METHIONINE IMPORT ATP-BINDING PROTEIN METN 2"/>
    <property type="match status" value="1"/>
</dbReference>
<dbReference type="Pfam" id="PF00005">
    <property type="entry name" value="ABC_tran"/>
    <property type="match status" value="1"/>
</dbReference>
<dbReference type="Pfam" id="PF09383">
    <property type="entry name" value="NIL"/>
    <property type="match status" value="1"/>
</dbReference>
<dbReference type="SMART" id="SM00382">
    <property type="entry name" value="AAA"/>
    <property type="match status" value="1"/>
</dbReference>
<dbReference type="SMART" id="SM00930">
    <property type="entry name" value="NIL"/>
    <property type="match status" value="1"/>
</dbReference>
<dbReference type="SUPFAM" id="SSF55021">
    <property type="entry name" value="ACT-like"/>
    <property type="match status" value="1"/>
</dbReference>
<dbReference type="SUPFAM" id="SSF52540">
    <property type="entry name" value="P-loop containing nucleoside triphosphate hydrolases"/>
    <property type="match status" value="1"/>
</dbReference>
<dbReference type="PROSITE" id="PS00211">
    <property type="entry name" value="ABC_TRANSPORTER_1"/>
    <property type="match status" value="1"/>
</dbReference>
<dbReference type="PROSITE" id="PS50893">
    <property type="entry name" value="ABC_TRANSPORTER_2"/>
    <property type="match status" value="1"/>
</dbReference>
<dbReference type="PROSITE" id="PS51264">
    <property type="entry name" value="METN"/>
    <property type="match status" value="1"/>
</dbReference>
<accession>Q631Y4</accession>
<evidence type="ECO:0000255" key="1">
    <source>
        <dbReference type="HAMAP-Rule" id="MF_01719"/>
    </source>
</evidence>
<name>METN3_BACCZ</name>
<organism>
    <name type="scientific">Bacillus cereus (strain ZK / E33L)</name>
    <dbReference type="NCBI Taxonomy" id="288681"/>
    <lineage>
        <taxon>Bacteria</taxon>
        <taxon>Bacillati</taxon>
        <taxon>Bacillota</taxon>
        <taxon>Bacilli</taxon>
        <taxon>Bacillales</taxon>
        <taxon>Bacillaceae</taxon>
        <taxon>Bacillus</taxon>
        <taxon>Bacillus cereus group</taxon>
    </lineage>
</organism>
<comment type="function">
    <text evidence="1">Part of the ABC transporter complex MetNIQ involved in methionine import. Responsible for energy coupling to the transport system.</text>
</comment>
<comment type="catalytic activity">
    <reaction evidence="1">
        <text>L-methionine(out) + ATP + H2O = L-methionine(in) + ADP + phosphate + H(+)</text>
        <dbReference type="Rhea" id="RHEA:29779"/>
        <dbReference type="ChEBI" id="CHEBI:15377"/>
        <dbReference type="ChEBI" id="CHEBI:15378"/>
        <dbReference type="ChEBI" id="CHEBI:30616"/>
        <dbReference type="ChEBI" id="CHEBI:43474"/>
        <dbReference type="ChEBI" id="CHEBI:57844"/>
        <dbReference type="ChEBI" id="CHEBI:456216"/>
        <dbReference type="EC" id="7.4.2.11"/>
    </reaction>
</comment>
<comment type="catalytic activity">
    <reaction evidence="1">
        <text>D-methionine(out) + ATP + H2O = D-methionine(in) + ADP + phosphate + H(+)</text>
        <dbReference type="Rhea" id="RHEA:29767"/>
        <dbReference type="ChEBI" id="CHEBI:15377"/>
        <dbReference type="ChEBI" id="CHEBI:15378"/>
        <dbReference type="ChEBI" id="CHEBI:30616"/>
        <dbReference type="ChEBI" id="CHEBI:43474"/>
        <dbReference type="ChEBI" id="CHEBI:57932"/>
        <dbReference type="ChEBI" id="CHEBI:456216"/>
        <dbReference type="EC" id="7.4.2.11"/>
    </reaction>
</comment>
<comment type="subunit">
    <text evidence="1">The complex is composed of two ATP-binding proteins (MetN), two transmembrane proteins (MetI) and a solute-binding protein (MetQ).</text>
</comment>
<comment type="subcellular location">
    <subcellularLocation>
        <location evidence="1">Cell membrane</location>
        <topology evidence="1">Peripheral membrane protein</topology>
    </subcellularLocation>
</comment>
<comment type="similarity">
    <text evidence="1">Belongs to the ABC transporter superfamily. Methionine importer (TC 3.A.1.24) family.</text>
</comment>
<keyword id="KW-0029">Amino-acid transport</keyword>
<keyword id="KW-0067">ATP-binding</keyword>
<keyword id="KW-1003">Cell membrane</keyword>
<keyword id="KW-0472">Membrane</keyword>
<keyword id="KW-0547">Nucleotide-binding</keyword>
<keyword id="KW-1278">Translocase</keyword>
<keyword id="KW-0813">Transport</keyword>
<sequence>MILLENVKKIYKAKSGDVTAVDNANLKIDKGEIFGVIGYSGAGKSSLIRLFNQLEKPTSGQITIANRVISAITGSELRKARQEIGMIFQHFNLLWSRTVRENIEFPLEIAGVDKAKRRKRVDELIHLVGLEGRGDAYPSQLSGGQKQRVGIARALANNPQVLLCDEATSALDPETTDQILDLLLDINKRLGLTIVLITHEMHVIRKICNRVAVMEKGKIVETGPVLDVFRNPQQDITKRFVQQLTDSEDTNETIESLIEKYPDGKVVRLQFIGEAVERPVLQRLMQRSDIEVSILQGNIAQTNNGSYGSLVVHLNGEETAIQQAIEGIHQDQVELEVIAHG</sequence>
<proteinExistence type="inferred from homology"/>
<feature type="chain" id="PRO_0000270240" description="Methionine import ATP-binding protein MetN 3">
    <location>
        <begin position="1"/>
        <end position="341"/>
    </location>
</feature>
<feature type="domain" description="ABC transporter" evidence="1">
    <location>
        <begin position="2"/>
        <end position="241"/>
    </location>
</feature>
<feature type="binding site" evidence="1">
    <location>
        <begin position="38"/>
        <end position="45"/>
    </location>
    <ligand>
        <name>ATP</name>
        <dbReference type="ChEBI" id="CHEBI:30616"/>
    </ligand>
</feature>
<gene>
    <name evidence="1" type="primary">metN3</name>
    <name type="ordered locus">BCE33L4711</name>
</gene>
<reference key="1">
    <citation type="journal article" date="2006" name="J. Bacteriol.">
        <title>Pathogenomic sequence analysis of Bacillus cereus and Bacillus thuringiensis isolates closely related to Bacillus anthracis.</title>
        <authorList>
            <person name="Han C.S."/>
            <person name="Xie G."/>
            <person name="Challacombe J.F."/>
            <person name="Altherr M.R."/>
            <person name="Bhotika S.S."/>
            <person name="Bruce D."/>
            <person name="Campbell C.S."/>
            <person name="Campbell M.L."/>
            <person name="Chen J."/>
            <person name="Chertkov O."/>
            <person name="Cleland C."/>
            <person name="Dimitrijevic M."/>
            <person name="Doggett N.A."/>
            <person name="Fawcett J.J."/>
            <person name="Glavina T."/>
            <person name="Goodwin L.A."/>
            <person name="Hill K.K."/>
            <person name="Hitchcock P."/>
            <person name="Jackson P.J."/>
            <person name="Keim P."/>
            <person name="Kewalramani A.R."/>
            <person name="Longmire J."/>
            <person name="Lucas S."/>
            <person name="Malfatti S."/>
            <person name="McMurry K."/>
            <person name="Meincke L.J."/>
            <person name="Misra M."/>
            <person name="Moseman B.L."/>
            <person name="Mundt M."/>
            <person name="Munk A.C."/>
            <person name="Okinaka R.T."/>
            <person name="Parson-Quintana B."/>
            <person name="Reilly L.P."/>
            <person name="Richardson P."/>
            <person name="Robinson D.L."/>
            <person name="Rubin E."/>
            <person name="Saunders E."/>
            <person name="Tapia R."/>
            <person name="Tesmer J.G."/>
            <person name="Thayer N."/>
            <person name="Thompson L.S."/>
            <person name="Tice H."/>
            <person name="Ticknor L.O."/>
            <person name="Wills P.L."/>
            <person name="Brettin T.S."/>
            <person name="Gilna P."/>
        </authorList>
    </citation>
    <scope>NUCLEOTIDE SEQUENCE [LARGE SCALE GENOMIC DNA]</scope>
    <source>
        <strain>ZK / E33L</strain>
    </source>
</reference>